<feature type="signal peptide" evidence="2">
    <location>
        <begin position="1"/>
        <end position="22"/>
    </location>
</feature>
<feature type="propeptide" id="PRO_0000371453" evidence="1">
    <location>
        <begin position="23"/>
        <end position="49"/>
    </location>
</feature>
<feature type="peptide" id="PRO_0000371454" description="Raniseptin-9" evidence="1">
    <location>
        <begin position="52"/>
        <end position="79"/>
    </location>
</feature>
<feature type="region of interest" description="Disordered" evidence="3">
    <location>
        <begin position="27"/>
        <end position="46"/>
    </location>
</feature>
<feature type="compositionally biased region" description="Acidic residues" evidence="3">
    <location>
        <begin position="30"/>
        <end position="44"/>
    </location>
</feature>
<sequence>MAFLKKSLFLVLFLGIVSLSICEEEKREGEEEEKQEEENEELSEEELRERRALLDKLKSLGKVVGKVAIGVAQHYLNPQ</sequence>
<reference evidence="6" key="1">
    <citation type="journal article" date="2008" name="Biochem. Biophys. Res. Commun.">
        <title>Post-secretory events alter the peptide content of the skin secretion of Hypsiboas raniceps.</title>
        <authorList>
            <person name="Magalhaes B.S."/>
            <person name="Melo J.A.T."/>
            <person name="Leite J.R.S.A."/>
            <person name="Silva L.P."/>
            <person name="Prates M.V."/>
            <person name="Vinecky F."/>
            <person name="Barbosa E.A."/>
            <person name="Verly R.M."/>
            <person name="Mehta A."/>
            <person name="Nicoli J.R."/>
            <person name="Bemquerer M.P."/>
            <person name="Andrade A.C."/>
            <person name="Bloch C. Jr."/>
        </authorList>
    </citation>
    <scope>NUCLEOTIDE SEQUENCE [MRNA]</scope>
    <source>
        <tissue evidence="4">Skin</tissue>
    </source>
</reference>
<protein>
    <recommendedName>
        <fullName evidence="5">Raniseptin-9</fullName>
        <shortName evidence="5">Rsp-9</shortName>
    </recommendedName>
</protein>
<comment type="function">
    <text evidence="1">Has antibacterial activity.</text>
</comment>
<comment type="subcellular location">
    <subcellularLocation>
        <location evidence="6">Secreted</location>
    </subcellularLocation>
</comment>
<comment type="tissue specificity">
    <text evidence="6">Expressed by the skin glands.</text>
</comment>
<comment type="similarity">
    <text evidence="2">Belongs to the frog skin active peptide (FSAP) family. Dermaseptin subfamily.</text>
</comment>
<evidence type="ECO:0000250" key="1">
    <source>
        <dbReference type="UniProtKB" id="P86037"/>
    </source>
</evidence>
<evidence type="ECO:0000255" key="2"/>
<evidence type="ECO:0000256" key="3">
    <source>
        <dbReference type="SAM" id="MobiDB-lite"/>
    </source>
</evidence>
<evidence type="ECO:0000269" key="4">
    <source>
    </source>
</evidence>
<evidence type="ECO:0000303" key="5">
    <source>
    </source>
</evidence>
<evidence type="ECO:0000305" key="6"/>
<keyword id="KW-0878">Amphibian defense peptide</keyword>
<keyword id="KW-0044">Antibiotic</keyword>
<keyword id="KW-0929">Antimicrobial</keyword>
<keyword id="KW-0165">Cleavage on pair of basic residues</keyword>
<keyword id="KW-0964">Secreted</keyword>
<keyword id="KW-0732">Signal</keyword>
<name>RNSP9_BOARA</name>
<organism>
    <name type="scientific">Boana raniceps</name>
    <name type="common">Chaco tree frog</name>
    <name type="synonym">Hyla roeschmanni</name>
    <dbReference type="NCBI Taxonomy" id="192750"/>
    <lineage>
        <taxon>Eukaryota</taxon>
        <taxon>Metazoa</taxon>
        <taxon>Chordata</taxon>
        <taxon>Craniata</taxon>
        <taxon>Vertebrata</taxon>
        <taxon>Euteleostomi</taxon>
        <taxon>Amphibia</taxon>
        <taxon>Batrachia</taxon>
        <taxon>Anura</taxon>
        <taxon>Neobatrachia</taxon>
        <taxon>Hyloidea</taxon>
        <taxon>Hylidae</taxon>
        <taxon>Hylinae</taxon>
        <taxon>Cophomantini</taxon>
        <taxon>Boana</taxon>
    </lineage>
</organism>
<proteinExistence type="inferred from homology"/>
<dbReference type="GO" id="GO:0005576">
    <property type="term" value="C:extracellular region"/>
    <property type="evidence" value="ECO:0007669"/>
    <property type="project" value="UniProtKB-SubCell"/>
</dbReference>
<dbReference type="GO" id="GO:0042742">
    <property type="term" value="P:defense response to bacterium"/>
    <property type="evidence" value="ECO:0007669"/>
    <property type="project" value="UniProtKB-KW"/>
</dbReference>
<dbReference type="InterPro" id="IPR004275">
    <property type="entry name" value="Frog_antimicrobial_propeptide"/>
</dbReference>
<dbReference type="InterPro" id="IPR016322">
    <property type="entry name" value="FSAP"/>
</dbReference>
<dbReference type="Pfam" id="PF03032">
    <property type="entry name" value="FSAP_sig_propep"/>
    <property type="match status" value="1"/>
</dbReference>
<dbReference type="PIRSF" id="PIRSF001822">
    <property type="entry name" value="Dermaseptin_precursor"/>
    <property type="match status" value="1"/>
</dbReference>
<accession>P86189</accession>